<name>RL4_AMOA5</name>
<protein>
    <recommendedName>
        <fullName evidence="1">Large ribosomal subunit protein uL4</fullName>
    </recommendedName>
    <alternativeName>
        <fullName evidence="3">50S ribosomal protein L4</fullName>
    </alternativeName>
</protein>
<sequence>MELSVLQYTGKDTGRKVVLSDTIFGITPNDHAIYLDVKNILANKRQGTHKSKERGEIAGSTKKIKKQKGTGTARAGSIKSPIFRGGGRVFGPKPRDYGFKLNKKLKKLARKSALTYKAQQGNISVLEDFSFEMPKTKMYLEMLQNLNMADQKTLLILPAVDKNLVLASRNLPNTSVALVEQINTYDLLYSKKILISETALSKLTENFNNA</sequence>
<gene>
    <name evidence="1" type="primary">rplD</name>
    <name type="ordered locus">Aasi_0196</name>
</gene>
<dbReference type="EMBL" id="CP001102">
    <property type="protein sequence ID" value="ACE05641.1"/>
    <property type="molecule type" value="Genomic_DNA"/>
</dbReference>
<dbReference type="RefSeq" id="WP_012472406.1">
    <property type="nucleotide sequence ID" value="NC_010830.1"/>
</dbReference>
<dbReference type="SMR" id="B3EUM2"/>
<dbReference type="STRING" id="452471.Aasi_0196"/>
<dbReference type="KEGG" id="aas:Aasi_0196"/>
<dbReference type="eggNOG" id="COG0088">
    <property type="taxonomic scope" value="Bacteria"/>
</dbReference>
<dbReference type="HOGENOM" id="CLU_041575_5_2_10"/>
<dbReference type="OrthoDB" id="9803201at2"/>
<dbReference type="Proteomes" id="UP000001227">
    <property type="component" value="Chromosome"/>
</dbReference>
<dbReference type="GO" id="GO:1990904">
    <property type="term" value="C:ribonucleoprotein complex"/>
    <property type="evidence" value="ECO:0007669"/>
    <property type="project" value="UniProtKB-KW"/>
</dbReference>
<dbReference type="GO" id="GO:0005840">
    <property type="term" value="C:ribosome"/>
    <property type="evidence" value="ECO:0007669"/>
    <property type="project" value="UniProtKB-KW"/>
</dbReference>
<dbReference type="GO" id="GO:0019843">
    <property type="term" value="F:rRNA binding"/>
    <property type="evidence" value="ECO:0007669"/>
    <property type="project" value="UniProtKB-UniRule"/>
</dbReference>
<dbReference type="GO" id="GO:0003735">
    <property type="term" value="F:structural constituent of ribosome"/>
    <property type="evidence" value="ECO:0007669"/>
    <property type="project" value="InterPro"/>
</dbReference>
<dbReference type="GO" id="GO:0006412">
    <property type="term" value="P:translation"/>
    <property type="evidence" value="ECO:0007669"/>
    <property type="project" value="UniProtKB-UniRule"/>
</dbReference>
<dbReference type="Gene3D" id="3.40.1370.10">
    <property type="match status" value="1"/>
</dbReference>
<dbReference type="HAMAP" id="MF_01328_B">
    <property type="entry name" value="Ribosomal_uL4_B"/>
    <property type="match status" value="1"/>
</dbReference>
<dbReference type="InterPro" id="IPR002136">
    <property type="entry name" value="Ribosomal_uL4"/>
</dbReference>
<dbReference type="InterPro" id="IPR013005">
    <property type="entry name" value="Ribosomal_uL4-like"/>
</dbReference>
<dbReference type="InterPro" id="IPR023574">
    <property type="entry name" value="Ribosomal_uL4_dom_sf"/>
</dbReference>
<dbReference type="NCBIfam" id="TIGR03953">
    <property type="entry name" value="rplD_bact"/>
    <property type="match status" value="1"/>
</dbReference>
<dbReference type="PANTHER" id="PTHR10746">
    <property type="entry name" value="50S RIBOSOMAL PROTEIN L4"/>
    <property type="match status" value="1"/>
</dbReference>
<dbReference type="PANTHER" id="PTHR10746:SF6">
    <property type="entry name" value="LARGE RIBOSOMAL SUBUNIT PROTEIN UL4M"/>
    <property type="match status" value="1"/>
</dbReference>
<dbReference type="Pfam" id="PF00573">
    <property type="entry name" value="Ribosomal_L4"/>
    <property type="match status" value="1"/>
</dbReference>
<dbReference type="SUPFAM" id="SSF52166">
    <property type="entry name" value="Ribosomal protein L4"/>
    <property type="match status" value="1"/>
</dbReference>
<reference key="1">
    <citation type="journal article" date="2010" name="J. Bacteriol.">
        <title>The genome of the amoeba symbiont 'Candidatus Amoebophilus asiaticus' reveals common mechanisms for host cell interaction among amoeba-associated bacteria.</title>
        <authorList>
            <person name="Schmitz-Esser S."/>
            <person name="Tischler P."/>
            <person name="Arnold R."/>
            <person name="Montanaro J."/>
            <person name="Wagner M."/>
            <person name="Rattei T."/>
            <person name="Horn M."/>
        </authorList>
    </citation>
    <scope>NUCLEOTIDE SEQUENCE [LARGE SCALE GENOMIC DNA]</scope>
    <source>
        <strain>5a2</strain>
    </source>
</reference>
<comment type="function">
    <text evidence="1">One of the primary rRNA binding proteins, this protein initially binds near the 5'-end of the 23S rRNA. It is important during the early stages of 50S assembly. It makes multiple contacts with different domains of the 23S rRNA in the assembled 50S subunit and ribosome.</text>
</comment>
<comment type="function">
    <text evidence="1">Forms part of the polypeptide exit tunnel.</text>
</comment>
<comment type="subunit">
    <text evidence="1">Part of the 50S ribosomal subunit.</text>
</comment>
<comment type="similarity">
    <text evidence="1">Belongs to the universal ribosomal protein uL4 family.</text>
</comment>
<proteinExistence type="inferred from homology"/>
<organism>
    <name type="scientific">Amoebophilus asiaticus (strain 5a2)</name>
    <dbReference type="NCBI Taxonomy" id="452471"/>
    <lineage>
        <taxon>Bacteria</taxon>
        <taxon>Pseudomonadati</taxon>
        <taxon>Bacteroidota</taxon>
        <taxon>Cytophagia</taxon>
        <taxon>Cytophagales</taxon>
        <taxon>Amoebophilaceae</taxon>
        <taxon>Candidatus Amoebophilus</taxon>
    </lineage>
</organism>
<keyword id="KW-1185">Reference proteome</keyword>
<keyword id="KW-0687">Ribonucleoprotein</keyword>
<keyword id="KW-0689">Ribosomal protein</keyword>
<keyword id="KW-0694">RNA-binding</keyword>
<keyword id="KW-0699">rRNA-binding</keyword>
<accession>B3EUM2</accession>
<evidence type="ECO:0000255" key="1">
    <source>
        <dbReference type="HAMAP-Rule" id="MF_01328"/>
    </source>
</evidence>
<evidence type="ECO:0000256" key="2">
    <source>
        <dbReference type="SAM" id="MobiDB-lite"/>
    </source>
</evidence>
<evidence type="ECO:0000305" key="3"/>
<feature type="chain" id="PRO_1000142072" description="Large ribosomal subunit protein uL4">
    <location>
        <begin position="1"/>
        <end position="210"/>
    </location>
</feature>
<feature type="region of interest" description="Disordered" evidence="2">
    <location>
        <begin position="46"/>
        <end position="77"/>
    </location>
</feature>